<feature type="chain" id="PRO_1000099527" description="UvrABC system protein C">
    <location>
        <begin position="1"/>
        <end position="598"/>
    </location>
</feature>
<feature type="domain" description="GIY-YIG" evidence="1">
    <location>
        <begin position="14"/>
        <end position="91"/>
    </location>
</feature>
<feature type="domain" description="UVR" evidence="1">
    <location>
        <begin position="196"/>
        <end position="231"/>
    </location>
</feature>
<keyword id="KW-0963">Cytoplasm</keyword>
<keyword id="KW-0227">DNA damage</keyword>
<keyword id="KW-0228">DNA excision</keyword>
<keyword id="KW-0234">DNA repair</keyword>
<keyword id="KW-0267">Excision nuclease</keyword>
<keyword id="KW-0742">SOS response</keyword>
<dbReference type="EMBL" id="CP000829">
    <property type="protein sequence ID" value="ACI61150.1"/>
    <property type="molecule type" value="Genomic_DNA"/>
</dbReference>
<dbReference type="SMR" id="B5XLD8"/>
<dbReference type="KEGG" id="soz:Spy49_0842"/>
<dbReference type="HOGENOM" id="CLU_014841_3_2_9"/>
<dbReference type="Proteomes" id="UP000001039">
    <property type="component" value="Chromosome"/>
</dbReference>
<dbReference type="GO" id="GO:0005737">
    <property type="term" value="C:cytoplasm"/>
    <property type="evidence" value="ECO:0007669"/>
    <property type="project" value="UniProtKB-SubCell"/>
</dbReference>
<dbReference type="GO" id="GO:0009380">
    <property type="term" value="C:excinuclease repair complex"/>
    <property type="evidence" value="ECO:0007669"/>
    <property type="project" value="InterPro"/>
</dbReference>
<dbReference type="GO" id="GO:0003677">
    <property type="term" value="F:DNA binding"/>
    <property type="evidence" value="ECO:0007669"/>
    <property type="project" value="UniProtKB-UniRule"/>
</dbReference>
<dbReference type="GO" id="GO:0009381">
    <property type="term" value="F:excinuclease ABC activity"/>
    <property type="evidence" value="ECO:0007669"/>
    <property type="project" value="UniProtKB-UniRule"/>
</dbReference>
<dbReference type="GO" id="GO:0006289">
    <property type="term" value="P:nucleotide-excision repair"/>
    <property type="evidence" value="ECO:0007669"/>
    <property type="project" value="UniProtKB-UniRule"/>
</dbReference>
<dbReference type="GO" id="GO:0009432">
    <property type="term" value="P:SOS response"/>
    <property type="evidence" value="ECO:0007669"/>
    <property type="project" value="UniProtKB-UniRule"/>
</dbReference>
<dbReference type="CDD" id="cd10434">
    <property type="entry name" value="GIY-YIG_UvrC_Cho"/>
    <property type="match status" value="1"/>
</dbReference>
<dbReference type="FunFam" id="3.30.420.340:FF:000002">
    <property type="entry name" value="UvrABC system protein C"/>
    <property type="match status" value="1"/>
</dbReference>
<dbReference type="FunFam" id="3.40.1440.10:FF:000001">
    <property type="entry name" value="UvrABC system protein C"/>
    <property type="match status" value="1"/>
</dbReference>
<dbReference type="Gene3D" id="1.10.150.20">
    <property type="entry name" value="5' to 3' exonuclease, C-terminal subdomain"/>
    <property type="match status" value="1"/>
</dbReference>
<dbReference type="Gene3D" id="3.40.1440.10">
    <property type="entry name" value="GIY-YIG endonuclease"/>
    <property type="match status" value="1"/>
</dbReference>
<dbReference type="Gene3D" id="4.10.860.10">
    <property type="entry name" value="UVR domain"/>
    <property type="match status" value="1"/>
</dbReference>
<dbReference type="Gene3D" id="3.30.420.340">
    <property type="entry name" value="UvrC, RNAse H endonuclease domain"/>
    <property type="match status" value="1"/>
</dbReference>
<dbReference type="HAMAP" id="MF_00203">
    <property type="entry name" value="UvrC"/>
    <property type="match status" value="1"/>
</dbReference>
<dbReference type="InterPro" id="IPR000305">
    <property type="entry name" value="GIY-YIG_endonuc"/>
</dbReference>
<dbReference type="InterPro" id="IPR035901">
    <property type="entry name" value="GIY-YIG_endonuc_sf"/>
</dbReference>
<dbReference type="InterPro" id="IPR047296">
    <property type="entry name" value="GIY-YIG_UvrC_Cho"/>
</dbReference>
<dbReference type="InterPro" id="IPR010994">
    <property type="entry name" value="RuvA_2-like"/>
</dbReference>
<dbReference type="InterPro" id="IPR001943">
    <property type="entry name" value="UVR_dom"/>
</dbReference>
<dbReference type="InterPro" id="IPR036876">
    <property type="entry name" value="UVR_dom_sf"/>
</dbReference>
<dbReference type="InterPro" id="IPR050066">
    <property type="entry name" value="UvrABC_protein_C"/>
</dbReference>
<dbReference type="InterPro" id="IPR004791">
    <property type="entry name" value="UvrC"/>
</dbReference>
<dbReference type="InterPro" id="IPR001162">
    <property type="entry name" value="UvrC_RNase_H_dom"/>
</dbReference>
<dbReference type="InterPro" id="IPR038476">
    <property type="entry name" value="UvrC_RNase_H_dom_sf"/>
</dbReference>
<dbReference type="NCBIfam" id="TIGR00194">
    <property type="entry name" value="uvrC"/>
    <property type="match status" value="1"/>
</dbReference>
<dbReference type="PANTHER" id="PTHR30562:SF1">
    <property type="entry name" value="UVRABC SYSTEM PROTEIN C"/>
    <property type="match status" value="1"/>
</dbReference>
<dbReference type="PANTHER" id="PTHR30562">
    <property type="entry name" value="UVRC/OXIDOREDUCTASE"/>
    <property type="match status" value="1"/>
</dbReference>
<dbReference type="Pfam" id="PF01541">
    <property type="entry name" value="GIY-YIG"/>
    <property type="match status" value="1"/>
</dbReference>
<dbReference type="Pfam" id="PF14520">
    <property type="entry name" value="HHH_5"/>
    <property type="match status" value="1"/>
</dbReference>
<dbReference type="Pfam" id="PF02151">
    <property type="entry name" value="UVR"/>
    <property type="match status" value="1"/>
</dbReference>
<dbReference type="Pfam" id="PF22920">
    <property type="entry name" value="UvrC_RNaseH"/>
    <property type="match status" value="1"/>
</dbReference>
<dbReference type="Pfam" id="PF08459">
    <property type="entry name" value="UvrC_RNaseH_dom"/>
    <property type="match status" value="1"/>
</dbReference>
<dbReference type="SMART" id="SM00465">
    <property type="entry name" value="GIYc"/>
    <property type="match status" value="1"/>
</dbReference>
<dbReference type="SUPFAM" id="SSF46600">
    <property type="entry name" value="C-terminal UvrC-binding domain of UvrB"/>
    <property type="match status" value="1"/>
</dbReference>
<dbReference type="SUPFAM" id="SSF82771">
    <property type="entry name" value="GIY-YIG endonuclease"/>
    <property type="match status" value="1"/>
</dbReference>
<dbReference type="SUPFAM" id="SSF47781">
    <property type="entry name" value="RuvA domain 2-like"/>
    <property type="match status" value="1"/>
</dbReference>
<dbReference type="PROSITE" id="PS50164">
    <property type="entry name" value="GIY_YIG"/>
    <property type="match status" value="1"/>
</dbReference>
<dbReference type="PROSITE" id="PS50151">
    <property type="entry name" value="UVR"/>
    <property type="match status" value="1"/>
</dbReference>
<dbReference type="PROSITE" id="PS50165">
    <property type="entry name" value="UVRC"/>
    <property type="match status" value="1"/>
</dbReference>
<sequence>MNELIKHKLELLPDSPGCYLHKDKEGTIIYVGKAKNLKKRVRSYFRGSHDTKTELLVSEIVDFEYIVTESDTEALLLEINLIQKNMPKYNIKLKDDKSYPFLKITNESFPRLVITRYIKKNDGLYFGPYPDSYTANEVKKLLDRIFPFKKCKNPINKVCFYYHLGQCCAHTICHTDKAYWDRLIDDVKHFLNGKDDKIIEDLRSKMLAASEEMAFERAAEYRDLISGIATMRTKQRVMSKDLQDRDIFGYYVDKGWMCVQVFFVRQGKLIQRDVNLFPYYNDAEEDFLTYMGQFYQDKQHFIPKEVFIPEAIDEELVAAIVPTKIIKPKRGEKKQLVALATKNARVSLQQKFDLLEKDIKKTSGAIENLGQLLRIDKPVRIEAFDNSNIQGTSPVAAMVVFVDGKPSKKDYRKFKIKTVVGPDDYASMREVLFRRYSRVKKEGLQAPNLIIVDGGVGQVNVAKDVIEKQLGLTIPVAGLQKNDKHQTHDLLFGNPLEVVPLPRRSEEFFLLHRIQDEVHRFAVTFHRQVRRKNSFSSTLDHISGLGPKRKQLLLRHFKTITAIASATSEEIQALGIPKTVVEAIQQQITDNKNDRSSP</sequence>
<protein>
    <recommendedName>
        <fullName evidence="1">UvrABC system protein C</fullName>
        <shortName evidence="1">Protein UvrC</shortName>
    </recommendedName>
    <alternativeName>
        <fullName evidence="1">Excinuclease ABC subunit C</fullName>
    </alternativeName>
</protein>
<evidence type="ECO:0000255" key="1">
    <source>
        <dbReference type="HAMAP-Rule" id="MF_00203"/>
    </source>
</evidence>
<accession>B5XLD8</accession>
<organism>
    <name type="scientific">Streptococcus pyogenes serotype M49 (strain NZ131)</name>
    <dbReference type="NCBI Taxonomy" id="471876"/>
    <lineage>
        <taxon>Bacteria</taxon>
        <taxon>Bacillati</taxon>
        <taxon>Bacillota</taxon>
        <taxon>Bacilli</taxon>
        <taxon>Lactobacillales</taxon>
        <taxon>Streptococcaceae</taxon>
        <taxon>Streptococcus</taxon>
    </lineage>
</organism>
<comment type="function">
    <text evidence="1">The UvrABC repair system catalyzes the recognition and processing of DNA lesions. UvrC both incises the 5' and 3' sides of the lesion. The N-terminal half is responsible for the 3' incision and the C-terminal half is responsible for the 5' incision.</text>
</comment>
<comment type="subunit">
    <text evidence="1">Interacts with UvrB in an incision complex.</text>
</comment>
<comment type="subcellular location">
    <subcellularLocation>
        <location evidence="1">Cytoplasm</location>
    </subcellularLocation>
</comment>
<comment type="similarity">
    <text evidence="1">Belongs to the UvrC family.</text>
</comment>
<gene>
    <name evidence="1" type="primary">uvrC</name>
    <name type="ordered locus">Spy49_0842</name>
</gene>
<proteinExistence type="inferred from homology"/>
<name>UVRC_STRPZ</name>
<reference key="1">
    <citation type="journal article" date="2008" name="J. Bacteriol.">
        <title>Genome sequence of a nephritogenic and highly transformable M49 strain of Streptococcus pyogenes.</title>
        <authorList>
            <person name="McShan W.M."/>
            <person name="Ferretti J.J."/>
            <person name="Karasawa T."/>
            <person name="Suvorov A.N."/>
            <person name="Lin S."/>
            <person name="Qin B."/>
            <person name="Jia H."/>
            <person name="Kenton S."/>
            <person name="Najar F."/>
            <person name="Wu H."/>
            <person name="Scott J."/>
            <person name="Roe B.A."/>
            <person name="Savic D.J."/>
        </authorList>
    </citation>
    <scope>NUCLEOTIDE SEQUENCE [LARGE SCALE GENOMIC DNA]</scope>
    <source>
        <strain>NZ131</strain>
    </source>
</reference>